<keyword id="KW-0025">Alternative splicing</keyword>
<keyword id="KW-0175">Coiled coil</keyword>
<keyword id="KW-1267">Proteomics identification</keyword>
<keyword id="KW-1185">Reference proteome</keyword>
<keyword id="KW-0677">Repeat</keyword>
<keyword id="KW-0833">Ubl conjugation pathway</keyword>
<keyword id="KW-0853">WD repeat</keyword>
<gene>
    <name type="primary">FBXW10</name>
</gene>
<accession>Q5XX13</accession>
<accession>C9JRY8</accession>
<accession>C9JZD7</accession>
<accession>Q8TC00</accession>
<accession>Q9H0F0</accession>
<reference key="1">
    <citation type="journal article" date="2004" name="Genes Dev.">
        <title>Systematic analysis and nomenclature of mammalian F-box proteins.</title>
        <authorList>
            <person name="Jin J."/>
            <person name="Cardozo T."/>
            <person name="Lovering R.C."/>
            <person name="Elledge S.J."/>
            <person name="Pagano M."/>
            <person name="Harper J.W."/>
        </authorList>
    </citation>
    <scope>NUCLEOTIDE SEQUENCE [MRNA] (ISOFORM 1)</scope>
    <source>
        <tissue>Testis</tissue>
    </source>
</reference>
<reference key="2">
    <citation type="journal article" date="2001" name="Genome Res.">
        <title>Towards a catalog of human genes and proteins: sequencing and analysis of 500 novel complete protein coding human cDNAs.</title>
        <authorList>
            <person name="Wiemann S."/>
            <person name="Weil B."/>
            <person name="Wellenreuther R."/>
            <person name="Gassenhuber J."/>
            <person name="Glassl S."/>
            <person name="Ansorge W."/>
            <person name="Boecher M."/>
            <person name="Bloecker H."/>
            <person name="Bauersachs S."/>
            <person name="Blum H."/>
            <person name="Lauber J."/>
            <person name="Duesterhoeft A."/>
            <person name="Beyer A."/>
            <person name="Koehrer K."/>
            <person name="Strack N."/>
            <person name="Mewes H.-W."/>
            <person name="Ottenwaelder B."/>
            <person name="Obermaier B."/>
            <person name="Tampe J."/>
            <person name="Heubner D."/>
            <person name="Wambutt R."/>
            <person name="Korn B."/>
            <person name="Klein M."/>
            <person name="Poustka A."/>
        </authorList>
    </citation>
    <scope>NUCLEOTIDE SEQUENCE [LARGE SCALE MRNA] (ISOFORM 3)</scope>
    <scope>VARIANTS ASN-23 AND THR-821</scope>
    <source>
        <tissue>Testis</tissue>
    </source>
</reference>
<reference key="3">
    <citation type="journal article" date="2006" name="Nature">
        <title>DNA sequence of human chromosome 17 and analysis of rearrangement in the human lineage.</title>
        <authorList>
            <person name="Zody M.C."/>
            <person name="Garber M."/>
            <person name="Adams D.J."/>
            <person name="Sharpe T."/>
            <person name="Harrow J."/>
            <person name="Lupski J.R."/>
            <person name="Nicholson C."/>
            <person name="Searle S.M."/>
            <person name="Wilming L."/>
            <person name="Young S.K."/>
            <person name="Abouelleil A."/>
            <person name="Allen N.R."/>
            <person name="Bi W."/>
            <person name="Bloom T."/>
            <person name="Borowsky M.L."/>
            <person name="Bugalter B.E."/>
            <person name="Butler J."/>
            <person name="Chang J.L."/>
            <person name="Chen C.-K."/>
            <person name="Cook A."/>
            <person name="Corum B."/>
            <person name="Cuomo C.A."/>
            <person name="de Jong P.J."/>
            <person name="DeCaprio D."/>
            <person name="Dewar K."/>
            <person name="FitzGerald M."/>
            <person name="Gilbert J."/>
            <person name="Gibson R."/>
            <person name="Gnerre S."/>
            <person name="Goldstein S."/>
            <person name="Grafham D.V."/>
            <person name="Grocock R."/>
            <person name="Hafez N."/>
            <person name="Hagopian D.S."/>
            <person name="Hart E."/>
            <person name="Norman C.H."/>
            <person name="Humphray S."/>
            <person name="Jaffe D.B."/>
            <person name="Jones M."/>
            <person name="Kamal M."/>
            <person name="Khodiyar V.K."/>
            <person name="LaButti K."/>
            <person name="Laird G."/>
            <person name="Lehoczky J."/>
            <person name="Liu X."/>
            <person name="Lokyitsang T."/>
            <person name="Loveland J."/>
            <person name="Lui A."/>
            <person name="Macdonald P."/>
            <person name="Major J.E."/>
            <person name="Matthews L."/>
            <person name="Mauceli E."/>
            <person name="McCarroll S.A."/>
            <person name="Mihalev A.H."/>
            <person name="Mudge J."/>
            <person name="Nguyen C."/>
            <person name="Nicol R."/>
            <person name="O'Leary S.B."/>
            <person name="Osoegawa K."/>
            <person name="Schwartz D.C."/>
            <person name="Shaw-Smith C."/>
            <person name="Stankiewicz P."/>
            <person name="Steward C."/>
            <person name="Swarbreck D."/>
            <person name="Venkataraman V."/>
            <person name="Whittaker C.A."/>
            <person name="Yang X."/>
            <person name="Zimmer A.R."/>
            <person name="Bradley A."/>
            <person name="Hubbard T."/>
            <person name="Birren B.W."/>
            <person name="Rogers J."/>
            <person name="Lander E.S."/>
            <person name="Nusbaum C."/>
        </authorList>
    </citation>
    <scope>NUCLEOTIDE SEQUENCE [LARGE SCALE GENOMIC DNA]</scope>
</reference>
<reference key="4">
    <citation type="journal article" date="2004" name="Genome Res.">
        <title>The status, quality, and expansion of the NIH full-length cDNA project: the Mammalian Gene Collection (MGC).</title>
        <authorList>
            <consortium name="The MGC Project Team"/>
        </authorList>
    </citation>
    <scope>NUCLEOTIDE SEQUENCE [LARGE SCALE MRNA] (ISOFORM 2)</scope>
    <scope>NUCLEOTIDE SEQUENCE [LARGE SCALE MRNA] OF 630-837 (ISOFORM 4)</scope>
    <source>
        <tissue>Testis</tissue>
    </source>
</reference>
<reference key="5">
    <citation type="journal article" date="2010" name="PLoS ONE">
        <title>Lamin A rod domain mutants target heterochromatin protein 1alpha and beta for proteasomal degradation by activation of F-box protein, FBXW10.</title>
        <authorList>
            <person name="Chaturvedi P."/>
            <person name="Parnaik V.K."/>
        </authorList>
    </citation>
    <scope>FUNCTION</scope>
    <scope>INDUCTION</scope>
</reference>
<dbReference type="EMBL" id="AY729024">
    <property type="protein sequence ID" value="AAU43731.1"/>
    <property type="molecule type" value="mRNA"/>
</dbReference>
<dbReference type="EMBL" id="AL136822">
    <property type="protein sequence ID" value="CAB66756.1"/>
    <property type="molecule type" value="mRNA"/>
</dbReference>
<dbReference type="EMBL" id="AC107982">
    <property type="status" value="NOT_ANNOTATED_CDS"/>
    <property type="molecule type" value="Genomic_DNA"/>
</dbReference>
<dbReference type="EMBL" id="BC028364">
    <property type="protein sequence ID" value="AAH28364.1"/>
    <property type="molecule type" value="mRNA"/>
</dbReference>
<dbReference type="EMBL" id="BI828401">
    <property type="status" value="NOT_ANNOTATED_CDS"/>
    <property type="molecule type" value="mRNA"/>
</dbReference>
<dbReference type="CCDS" id="CCDS11199.3">
    <molecule id="Q5XX13-1"/>
</dbReference>
<dbReference type="CCDS" id="CCDS58524.1">
    <molecule id="Q5XX13-3"/>
</dbReference>
<dbReference type="CCDS" id="CCDS92270.1">
    <molecule id="Q5XX13-2"/>
</dbReference>
<dbReference type="RefSeq" id="NP_001254514.1">
    <molecule id="Q5XX13-1"/>
    <property type="nucleotide sequence ID" value="NM_001267585.2"/>
</dbReference>
<dbReference type="RefSeq" id="NP_001254515.1">
    <molecule id="Q5XX13-3"/>
    <property type="nucleotide sequence ID" value="NM_001267586.2"/>
</dbReference>
<dbReference type="RefSeq" id="NP_001397988.1">
    <molecule id="Q5XX13-2"/>
    <property type="nucleotide sequence ID" value="NM_001411059.1"/>
</dbReference>
<dbReference type="RefSeq" id="XP_047291085.1">
    <molecule id="Q5XX13-4"/>
    <property type="nucleotide sequence ID" value="XM_047435129.1"/>
</dbReference>
<dbReference type="RefSeq" id="XP_054170689.1">
    <molecule id="Q5XX13-4"/>
    <property type="nucleotide sequence ID" value="XM_054314714.1"/>
</dbReference>
<dbReference type="SMR" id="Q5XX13"/>
<dbReference type="BioGRID" id="115772">
    <property type="interactions" value="137"/>
</dbReference>
<dbReference type="ComplexPortal" id="CPX-7786">
    <property type="entry name" value="SCF E3 ubiquitin ligase complex, FBXW10 variant"/>
</dbReference>
<dbReference type="FunCoup" id="Q5XX13">
    <property type="interactions" value="9"/>
</dbReference>
<dbReference type="IntAct" id="Q5XX13">
    <property type="interactions" value="2"/>
</dbReference>
<dbReference type="STRING" id="9606.ENSP00000379025"/>
<dbReference type="GlyGen" id="Q5XX13">
    <property type="glycosylation" value="1 site, 1 O-linked glycan (1 site)"/>
</dbReference>
<dbReference type="iPTMnet" id="Q5XX13"/>
<dbReference type="PhosphoSitePlus" id="Q5XX13"/>
<dbReference type="BioMuta" id="FBXW10"/>
<dbReference type="DMDM" id="296434504"/>
<dbReference type="MassIVE" id="Q5XX13"/>
<dbReference type="PaxDb" id="9606-ENSP00000379025"/>
<dbReference type="PeptideAtlas" id="Q5XX13"/>
<dbReference type="Antibodypedia" id="13562">
    <property type="antibodies" value="67 antibodies from 12 providers"/>
</dbReference>
<dbReference type="DNASU" id="10517"/>
<dbReference type="Ensembl" id="ENST00000301938.4">
    <molecule id="Q5XX13-3"/>
    <property type="protein sequence ID" value="ENSP00000306937.4"/>
    <property type="gene ID" value="ENSG00000171931.13"/>
</dbReference>
<dbReference type="Ensembl" id="ENST00000308799.8">
    <molecule id="Q5XX13-2"/>
    <property type="protein sequence ID" value="ENSP00000310382.4"/>
    <property type="gene ID" value="ENSG00000171931.13"/>
</dbReference>
<dbReference type="Ensembl" id="ENST00000395665.9">
    <molecule id="Q5XX13-1"/>
    <property type="protein sequence ID" value="ENSP00000379025.4"/>
    <property type="gene ID" value="ENSG00000171931.13"/>
</dbReference>
<dbReference type="GeneID" id="10517"/>
<dbReference type="KEGG" id="hsa:10517"/>
<dbReference type="MANE-Select" id="ENST00000395665.9">
    <property type="protein sequence ID" value="ENSP00000379025.4"/>
    <property type="RefSeq nucleotide sequence ID" value="NM_001267585.2"/>
    <property type="RefSeq protein sequence ID" value="NP_001254514.1"/>
</dbReference>
<dbReference type="UCSC" id="uc002guk.4">
    <molecule id="Q5XX13-1"/>
    <property type="organism name" value="human"/>
</dbReference>
<dbReference type="AGR" id="HGNC:1211"/>
<dbReference type="CTD" id="10517"/>
<dbReference type="DisGeNET" id="10517"/>
<dbReference type="GeneCards" id="FBXW10"/>
<dbReference type="HGNC" id="HGNC:1211">
    <property type="gene designation" value="FBXW10"/>
</dbReference>
<dbReference type="HPA" id="ENSG00000171931">
    <property type="expression patterns" value="Tissue enriched (testis)"/>
</dbReference>
<dbReference type="MIM" id="611679">
    <property type="type" value="gene"/>
</dbReference>
<dbReference type="neXtProt" id="NX_Q5XX13"/>
<dbReference type="OpenTargets" id="ENSG00000171931"/>
<dbReference type="PharmGKB" id="PA25575"/>
<dbReference type="VEuPathDB" id="HostDB:ENSG00000171931"/>
<dbReference type="eggNOG" id="KOG0274">
    <property type="taxonomic scope" value="Eukaryota"/>
</dbReference>
<dbReference type="GeneTree" id="ENSGT00940000158003"/>
<dbReference type="HOGENOM" id="CLU_011071_0_0_1"/>
<dbReference type="InParanoid" id="Q5XX13"/>
<dbReference type="OMA" id="QKCETCI"/>
<dbReference type="OrthoDB" id="674604at2759"/>
<dbReference type="PAN-GO" id="Q5XX13">
    <property type="GO annotations" value="0 GO annotations based on evolutionary models"/>
</dbReference>
<dbReference type="PhylomeDB" id="Q5XX13"/>
<dbReference type="TreeFam" id="TF329175"/>
<dbReference type="PathwayCommons" id="Q5XX13"/>
<dbReference type="Reactome" id="R-HSA-390471">
    <property type="pathway name" value="Association of TriC/CCT with target proteins during biosynthesis"/>
</dbReference>
<dbReference type="Reactome" id="R-HSA-8951664">
    <property type="pathway name" value="Neddylation"/>
</dbReference>
<dbReference type="Reactome" id="R-HSA-983168">
    <property type="pathway name" value="Antigen processing: Ubiquitination &amp; Proteasome degradation"/>
</dbReference>
<dbReference type="SignaLink" id="Q5XX13"/>
<dbReference type="SIGNOR" id="Q5XX13"/>
<dbReference type="BioGRID-ORCS" id="10517">
    <property type="hits" value="16 hits in 1184 CRISPR screens"/>
</dbReference>
<dbReference type="ChiTaRS" id="FBXW10">
    <property type="organism name" value="human"/>
</dbReference>
<dbReference type="GeneWiki" id="FBXW10"/>
<dbReference type="GenomeRNAi" id="10517"/>
<dbReference type="Pharos" id="Q5XX13">
    <property type="development level" value="Tbio"/>
</dbReference>
<dbReference type="PRO" id="PR:Q5XX13"/>
<dbReference type="Proteomes" id="UP000005640">
    <property type="component" value="Chromosome 17"/>
</dbReference>
<dbReference type="RNAct" id="Q5XX13">
    <property type="molecule type" value="protein"/>
</dbReference>
<dbReference type="Bgee" id="ENSG00000171931">
    <property type="expression patterns" value="Expressed in male germ line stem cell (sensu Vertebrata) in testis and 83 other cell types or tissues"/>
</dbReference>
<dbReference type="ExpressionAtlas" id="Q5XX13">
    <property type="expression patterns" value="baseline and differential"/>
</dbReference>
<dbReference type="GO" id="GO:0005829">
    <property type="term" value="C:cytosol"/>
    <property type="evidence" value="ECO:0000304"/>
    <property type="project" value="Reactome"/>
</dbReference>
<dbReference type="CDD" id="cd22136">
    <property type="entry name" value="F-box_FBXW10"/>
    <property type="match status" value="1"/>
</dbReference>
<dbReference type="CDD" id="cd00200">
    <property type="entry name" value="WD40"/>
    <property type="match status" value="1"/>
</dbReference>
<dbReference type="FunFam" id="2.130.10.10:FF:000813">
    <property type="entry name" value="F-box and WD repeat domain containing 10"/>
    <property type="match status" value="1"/>
</dbReference>
<dbReference type="Gene3D" id="1.20.1280.50">
    <property type="match status" value="1"/>
</dbReference>
<dbReference type="Gene3D" id="2.130.10.10">
    <property type="entry name" value="YVTN repeat-like/Quinoprotein amine dehydrogenase"/>
    <property type="match status" value="1"/>
</dbReference>
<dbReference type="InterPro" id="IPR036047">
    <property type="entry name" value="F-box-like_dom_sf"/>
</dbReference>
<dbReference type="InterPro" id="IPR020472">
    <property type="entry name" value="G-protein_beta_WD-40_rep"/>
</dbReference>
<dbReference type="InterPro" id="IPR051075">
    <property type="entry name" value="SCF_subunit_WD-repeat"/>
</dbReference>
<dbReference type="InterPro" id="IPR015943">
    <property type="entry name" value="WD40/YVTN_repeat-like_dom_sf"/>
</dbReference>
<dbReference type="InterPro" id="IPR019775">
    <property type="entry name" value="WD40_repeat_CS"/>
</dbReference>
<dbReference type="InterPro" id="IPR036322">
    <property type="entry name" value="WD40_repeat_dom_sf"/>
</dbReference>
<dbReference type="InterPro" id="IPR001680">
    <property type="entry name" value="WD40_rpt"/>
</dbReference>
<dbReference type="PANTHER" id="PTHR19872:SF7">
    <property type="entry name" value="F-BOX AND WD REPEAT DOMAIN CONTAINING PROTEIN 10B-RELATED"/>
    <property type="match status" value="1"/>
</dbReference>
<dbReference type="PANTHER" id="PTHR19872">
    <property type="entry name" value="UBIQUITIN LIGASE SPECIFICITY FACTOR/HREP PROTEIN"/>
    <property type="match status" value="1"/>
</dbReference>
<dbReference type="Pfam" id="PF00400">
    <property type="entry name" value="WD40"/>
    <property type="match status" value="3"/>
</dbReference>
<dbReference type="PRINTS" id="PR00320">
    <property type="entry name" value="GPROTEINBRPT"/>
</dbReference>
<dbReference type="SMART" id="SM00320">
    <property type="entry name" value="WD40"/>
    <property type="match status" value="5"/>
</dbReference>
<dbReference type="SUPFAM" id="SSF81383">
    <property type="entry name" value="F-box domain"/>
    <property type="match status" value="1"/>
</dbReference>
<dbReference type="SUPFAM" id="SSF50978">
    <property type="entry name" value="WD40 repeat-like"/>
    <property type="match status" value="1"/>
</dbReference>
<dbReference type="PROSITE" id="PS00678">
    <property type="entry name" value="WD_REPEATS_1"/>
    <property type="match status" value="1"/>
</dbReference>
<dbReference type="PROSITE" id="PS50082">
    <property type="entry name" value="WD_REPEATS_2"/>
    <property type="match status" value="3"/>
</dbReference>
<dbReference type="PROSITE" id="PS50294">
    <property type="entry name" value="WD_REPEATS_REGION"/>
    <property type="match status" value="1"/>
</dbReference>
<name>FBW10_HUMAN</name>
<proteinExistence type="evidence at protein level"/>
<comment type="function">
    <text evidence="4">Probable substrate-recognition component of a SCF (SKP1-CUL1-F-box protein)-type E3 ubiquitin ligase complex which mediates the ubiquitination and subsequent proteasomal degradation of target proteins. Overexpression is leading to degradation of CBX5 and CBX1.</text>
</comment>
<comment type="alternative products">
    <event type="alternative splicing"/>
    <isoform>
        <id>Q5XX13-1</id>
        <name>1</name>
        <sequence type="displayed"/>
    </isoform>
    <isoform>
        <id>Q5XX13-2</id>
        <name>2</name>
        <sequence type="described" ref="VSP_030727 VSP_030729"/>
    </isoform>
    <isoform>
        <id>Q5XX13-3</id>
        <name>3</name>
        <sequence type="described" ref="VSP_030728"/>
    </isoform>
    <isoform>
        <id>Q5XX13-4</id>
        <name>4</name>
        <sequence type="described" ref="VSP_039178"/>
    </isoform>
</comment>
<comment type="induction">
    <text evidence="4">By disease-causing laminin A mutants also inducing CBX5 and CBX1 proteasomal degradation.</text>
</comment>
<evidence type="ECO:0000255" key="1"/>
<evidence type="ECO:0000256" key="2">
    <source>
        <dbReference type="SAM" id="MobiDB-lite"/>
    </source>
</evidence>
<evidence type="ECO:0000269" key="3">
    <source>
    </source>
</evidence>
<evidence type="ECO:0000269" key="4">
    <source>
    </source>
</evidence>
<evidence type="ECO:0000303" key="5">
    <source>
    </source>
</evidence>
<evidence type="ECO:0000303" key="6">
    <source>
    </source>
</evidence>
<evidence type="ECO:0000305" key="7"/>
<feature type="chain" id="PRO_0000315834" description="F-box/WD repeat-containing protein 10">
    <location>
        <begin position="1"/>
        <end position="1052"/>
    </location>
</feature>
<feature type="repeat" description="WD 1">
    <location>
        <begin position="169"/>
        <end position="206"/>
    </location>
</feature>
<feature type="domain" description="F-box">
    <location>
        <begin position="276"/>
        <end position="323"/>
    </location>
</feature>
<feature type="repeat" description="WD 2">
    <location>
        <begin position="409"/>
        <end position="447"/>
    </location>
</feature>
<feature type="repeat" description="WD 3">
    <location>
        <begin position="451"/>
        <end position="490"/>
    </location>
</feature>
<feature type="repeat" description="WD 4">
    <location>
        <begin position="493"/>
        <end position="532"/>
    </location>
</feature>
<feature type="repeat" description="WD 5">
    <location>
        <begin position="534"/>
        <end position="569"/>
    </location>
</feature>
<feature type="repeat" description="WD 6">
    <location>
        <begin position="572"/>
        <end position="609"/>
    </location>
</feature>
<feature type="repeat" description="WD 7">
    <location>
        <begin position="611"/>
        <end position="652"/>
    </location>
</feature>
<feature type="region of interest" description="Disordered" evidence="2">
    <location>
        <begin position="766"/>
        <end position="805"/>
    </location>
</feature>
<feature type="coiled-coil region" evidence="1">
    <location>
        <begin position="690"/>
        <end position="719"/>
    </location>
</feature>
<feature type="coiled-coil region" evidence="1">
    <location>
        <begin position="986"/>
        <end position="1010"/>
    </location>
</feature>
<feature type="compositionally biased region" description="Basic and acidic residues" evidence="2">
    <location>
        <begin position="775"/>
        <end position="786"/>
    </location>
</feature>
<feature type="splice variant" id="VSP_030727" description="In isoform 2." evidence="6">
    <original>R</original>
    <variation>SMLGCMRGFPRHLPSWPSSGVSGSIFFFPG</variation>
    <location>
        <position position="291"/>
    </location>
</feature>
<feature type="splice variant" id="VSP_030728" description="In isoform 3." evidence="5">
    <location>
        <begin position="617"/>
        <end position="669"/>
    </location>
</feature>
<feature type="splice variant" id="VSP_030729" description="In isoform 2." evidence="6">
    <location>
        <begin position="760"/>
        <end position="779"/>
    </location>
</feature>
<feature type="splice variant" id="VSP_039178" description="In isoform 4." evidence="6">
    <location>
        <position position="779"/>
    </location>
</feature>
<feature type="sequence variant" id="VAR_038341" description="In dbSNP:rs11544711." evidence="3">
    <original>I</original>
    <variation>N</variation>
    <location>
        <position position="23"/>
    </location>
</feature>
<feature type="sequence variant" id="VAR_057600" description="In dbSNP:rs7209610.">
    <original>R</original>
    <variation>G</variation>
    <location>
        <position position="372"/>
    </location>
</feature>
<feature type="sequence variant" id="VAR_038342" description="In dbSNP:rs1026259." evidence="3">
    <original>A</original>
    <variation>T</variation>
    <location>
        <position position="821"/>
    </location>
</feature>
<feature type="sequence conflict" description="In Ref. 2; CAB66756." evidence="7" ref="2">
    <original>E</original>
    <variation>K</variation>
    <location>
        <position position="236"/>
    </location>
</feature>
<feature type="sequence conflict" description="In Ref. 1; AAU43731 and 4; AAH28364." evidence="7" ref="1 4">
    <original>R</original>
    <variation>L</variation>
    <location>
        <position position="275"/>
    </location>
</feature>
<feature type="sequence conflict" description="In Ref. 2; CAB66756." evidence="7" ref="2">
    <original>D</original>
    <variation>V</variation>
    <location>
        <position position="413"/>
    </location>
</feature>
<feature type="sequence conflict" description="In Ref. 1; AAU43731." evidence="7" ref="1">
    <original>R</original>
    <variation>L</variation>
    <location>
        <position position="638"/>
    </location>
</feature>
<organism>
    <name type="scientific">Homo sapiens</name>
    <name type="common">Human</name>
    <dbReference type="NCBI Taxonomy" id="9606"/>
    <lineage>
        <taxon>Eukaryota</taxon>
        <taxon>Metazoa</taxon>
        <taxon>Chordata</taxon>
        <taxon>Craniata</taxon>
        <taxon>Vertebrata</taxon>
        <taxon>Euteleostomi</taxon>
        <taxon>Mammalia</taxon>
        <taxon>Eutheria</taxon>
        <taxon>Euarchontoglires</taxon>
        <taxon>Primates</taxon>
        <taxon>Haplorrhini</taxon>
        <taxon>Catarrhini</taxon>
        <taxon>Hominidae</taxon>
        <taxon>Homo</taxon>
    </lineage>
</organism>
<protein>
    <recommendedName>
        <fullName>F-box/WD repeat-containing protein 10</fullName>
    </recommendedName>
    <alternativeName>
        <fullName>F-box and WD-40 domain-containing protein 10</fullName>
    </alternativeName>
    <alternativeName>
        <fullName>Ubiquitin ligase-specificity factor</fullName>
    </alternativeName>
</protein>
<sequence length="1052" mass="119846">MENLESRLKNAPYFRCEKGTDSIPLCRKCETCVLAWKIFSTKEWFCRINDISQRRFLVGILKQLNSLYLLHYFQNILQTTQGKDFIYNRSRINLSKKEGKVVKSSLNQMLDKTVEQKMKEILYWFANSTQWTKANYTLLLLQMCNPKLLLTAANVIRVLFLREENNISGLNQDITDVCFSPEKDHSSKSATSQVYWTAKTQHTSLPLSKAPENEHLLGAASNPEEPWRNSLRCISEMNRLFSGKGDITKPGYDPCNLLVDLDDIRDLSSGFSKYRDFIRYLPIHLSKYILRMLDRHTLNKCASVSQHWAAMAQQVKMDLSAHGFIQNQITFLQGSYTRGIDPNYANKVSIPVPKMVDDGKSMRVKHPKWKLRTKNEYNLWTAYQNEETQQVLIEERNVFCGTYNVRILSDTWDQNRVIHYSGGDLIAVSSNRKIHLLDIIQVKAIPVEFRGHAGSVRALFLCEEENFLLSGSYDLSIRYWDLKSGVCTRIFGGHQGTITCMDLCKNRLVSGGRDCQVKVWDVDTGKCLKTFRHKDPILATRINDTYIVSSCERGLVKVWHIAMAQLVKTLSGHEGAVKCLFFDQWHLLSGSTDGLVMAWSMVGKYERCLMAFKHPKEVLDVSLLFLRVISACADGKIRIYNFLNGNCMKVLKANGRGDPVLSFFIQGNRMVVNTESNVLMFQFEHIKWQYAVEKTKQKKNKEKEEEKEENSLMEILSKCNIQVHSPRESVSSKQTVIQELLPGKPPKSRVLLKPAKFSSAVLIEELQSQGKSKSPRRDADDVEKAQKQGQLETPGKLPSHPKKKSWKIPMSPDQFLLTVSALQHAHNSGEFAYPCRPQTEITDVWGPSISYPRKVLNFKGKSIQRAVDRLRLSNPPIDVKRTSIPLEIQKLQPNLKISLHSPRVQSTIPQPMIIRSRFSGSLKGGDQVTSSIERAVCSTGPLTSMQVIKPNRMLAPQVGTATLSLKKERPRIYTALDPFRVNTEFVLLTVKEEKEHQEAKMKEYQARESTGVVDPGKVSKAAWIRKIKGLPIDNFTKQGKTAAPELGQNVFI</sequence>